<name>MYBPH_RAT</name>
<organism>
    <name type="scientific">Rattus norvegicus</name>
    <name type="common">Rat</name>
    <dbReference type="NCBI Taxonomy" id="10116"/>
    <lineage>
        <taxon>Eukaryota</taxon>
        <taxon>Metazoa</taxon>
        <taxon>Chordata</taxon>
        <taxon>Craniata</taxon>
        <taxon>Vertebrata</taxon>
        <taxon>Euteleostomi</taxon>
        <taxon>Mammalia</taxon>
        <taxon>Eutheria</taxon>
        <taxon>Euarchontoglires</taxon>
        <taxon>Glires</taxon>
        <taxon>Rodentia</taxon>
        <taxon>Myomorpha</taxon>
        <taxon>Muroidea</taxon>
        <taxon>Muridae</taxon>
        <taxon>Murinae</taxon>
        <taxon>Rattus</taxon>
    </lineage>
</organism>
<proteinExistence type="evidence at protein level"/>
<protein>
    <recommendedName>
        <fullName>Myosin-binding protein H</fullName>
        <shortName>MyBP-H</shortName>
    </recommendedName>
    <alternativeName>
        <fullName>H-protein</fullName>
    </alternativeName>
</protein>
<evidence type="ECO:0000255" key="1">
    <source>
        <dbReference type="PROSITE-ProRule" id="PRU00316"/>
    </source>
</evidence>
<evidence type="ECO:0000256" key="2">
    <source>
        <dbReference type="SAM" id="MobiDB-lite"/>
    </source>
</evidence>
<evidence type="ECO:0000305" key="3"/>
<evidence type="ECO:0007744" key="4">
    <source>
    </source>
</evidence>
<reference key="1">
    <citation type="journal article" date="1998" name="Arch. Pharm. Res.">
        <title>Nucleotide and deduced amino acid sequences of rat myosin binding protein H (MyBP-H).</title>
        <authorList>
            <person name="Jung J."/>
            <person name="Oh J."/>
            <person name="Lee K."/>
        </authorList>
    </citation>
    <scope>NUCLEOTIDE SEQUENCE [MRNA]</scope>
    <source>
        <tissue>Skeletal muscle</tissue>
    </source>
</reference>
<reference key="2">
    <citation type="journal article" date="2012" name="Nat. Commun.">
        <title>Quantitative maps of protein phosphorylation sites across 14 different rat organs and tissues.</title>
        <authorList>
            <person name="Lundby A."/>
            <person name="Secher A."/>
            <person name="Lage K."/>
            <person name="Nordsborg N.B."/>
            <person name="Dmytriyev A."/>
            <person name="Lundby C."/>
            <person name="Olsen J.V."/>
        </authorList>
    </citation>
    <scope>PHOSPHORYLATION [LARGE SCALE ANALYSIS] AT THR-2; THR-6 AND THR-26</scope>
    <scope>IDENTIFICATION BY MASS SPECTROMETRY [LARGE SCALE ANALYSIS]</scope>
</reference>
<keyword id="KW-0130">Cell adhesion</keyword>
<keyword id="KW-0393">Immunoglobulin domain</keyword>
<keyword id="KW-0514">Muscle protein</keyword>
<keyword id="KW-0597">Phosphoprotein</keyword>
<keyword id="KW-1185">Reference proteome</keyword>
<keyword id="KW-0677">Repeat</keyword>
<keyword id="KW-0787">Thick filament</keyword>
<sequence length="484" mass="52656">MTGKATPEASVSTSEGTAPEPAKVPTPEPSGQVAASESTGQEQAPEPQKQPQAQDPAAHEAPATPATTKPEAPSEDVPSAPLQLTLEDVSHSSLTVSWEPPEDLGSWGSRAMCWSSVREGASEWVPVNPRPVMVTQQTVRNLALGDKFFLRVTAVNSAGAGPPAVLDQPVHIQEITEAPKIRVPRHLRQTYIRQVGESVNLQIPFQGKPKPQASWTHNGHALDSQRVNVRSGDQDSILFIRSAQRSDSGRYELTVRLEGLEAKAAIDILVIEKPGPPSSIKLLDVWGCNAALEWMPPQDTGNTELLGYTVQKADKKTGQWFTVLERYHPTTCTVSDLIIGNSYSFRVFSENLCGLSDLATTTKELAHIHKAAITAKPREFTERDFSEPPSFTQPVADRTSTPGYSTQLFCSVRASPKPKIIWMKNKMSIQGDPKYRAVSEQGVCTLEIRKPSPFDSGVYTCKAINVLGEPAVDCRLEVKASATH</sequence>
<feature type="chain" id="PRO_0000072700" description="Myosin-binding protein H">
    <location>
        <begin position="1"/>
        <end position="484"/>
    </location>
</feature>
<feature type="domain" description="Fibronectin type-III 1" evidence="1">
    <location>
        <begin position="80"/>
        <end position="175"/>
    </location>
</feature>
<feature type="domain" description="Ig-like C2-type 1">
    <location>
        <begin position="179"/>
        <end position="267"/>
    </location>
</feature>
<feature type="domain" description="Fibronectin type-III 2" evidence="1">
    <location>
        <begin position="276"/>
        <end position="371"/>
    </location>
</feature>
<feature type="domain" description="Ig-like C2-type 2">
    <location>
        <begin position="389"/>
        <end position="479"/>
    </location>
</feature>
<feature type="region of interest" description="Disordered" evidence="2">
    <location>
        <begin position="1"/>
        <end position="78"/>
    </location>
</feature>
<feature type="compositionally biased region" description="Low complexity" evidence="2">
    <location>
        <begin position="41"/>
        <end position="71"/>
    </location>
</feature>
<feature type="modified residue" description="Phosphothreonine" evidence="4">
    <location>
        <position position="2"/>
    </location>
</feature>
<feature type="modified residue" description="Phosphothreonine" evidence="4">
    <location>
        <position position="6"/>
    </location>
</feature>
<feature type="modified residue" description="Phosphothreonine" evidence="4">
    <location>
        <position position="26"/>
    </location>
</feature>
<dbReference type="EMBL" id="AF077338">
    <property type="protein sequence ID" value="AAC27526.1"/>
    <property type="molecule type" value="mRNA"/>
</dbReference>
<dbReference type="RefSeq" id="NP_114001.1">
    <property type="nucleotide sequence ID" value="NM_031813.1"/>
</dbReference>
<dbReference type="SMR" id="O88599"/>
<dbReference type="FunCoup" id="O88599">
    <property type="interactions" value="23"/>
</dbReference>
<dbReference type="STRING" id="10116.ENSRNOP00000044331"/>
<dbReference type="GlyGen" id="O88599">
    <property type="glycosylation" value="1 site"/>
</dbReference>
<dbReference type="iPTMnet" id="O88599"/>
<dbReference type="PhosphoSitePlus" id="O88599"/>
<dbReference type="PaxDb" id="10116-ENSRNOP00000044331"/>
<dbReference type="GeneID" id="83708"/>
<dbReference type="KEGG" id="rno:83708"/>
<dbReference type="UCSC" id="RGD:620287">
    <property type="organism name" value="rat"/>
</dbReference>
<dbReference type="AGR" id="RGD:620287"/>
<dbReference type="CTD" id="4608"/>
<dbReference type="RGD" id="620287">
    <property type="gene designation" value="Mybph"/>
</dbReference>
<dbReference type="eggNOG" id="ENOG502QVIQ">
    <property type="taxonomic scope" value="Eukaryota"/>
</dbReference>
<dbReference type="InParanoid" id="O88599"/>
<dbReference type="PhylomeDB" id="O88599"/>
<dbReference type="PRO" id="PR:O88599"/>
<dbReference type="Proteomes" id="UP000002494">
    <property type="component" value="Unplaced"/>
</dbReference>
<dbReference type="GO" id="GO:0031430">
    <property type="term" value="C:M band"/>
    <property type="evidence" value="ECO:0000318"/>
    <property type="project" value="GO_Central"/>
</dbReference>
<dbReference type="GO" id="GO:0032982">
    <property type="term" value="C:myosin filament"/>
    <property type="evidence" value="ECO:0007669"/>
    <property type="project" value="UniProtKB-KW"/>
</dbReference>
<dbReference type="GO" id="GO:0007155">
    <property type="term" value="P:cell adhesion"/>
    <property type="evidence" value="ECO:0007669"/>
    <property type="project" value="UniProtKB-KW"/>
</dbReference>
<dbReference type="GO" id="GO:0045214">
    <property type="term" value="P:sarcomere organization"/>
    <property type="evidence" value="ECO:0000318"/>
    <property type="project" value="GO_Central"/>
</dbReference>
<dbReference type="CDD" id="cd00063">
    <property type="entry name" value="FN3"/>
    <property type="match status" value="2"/>
</dbReference>
<dbReference type="CDD" id="cd05748">
    <property type="entry name" value="Ig_Titin_like"/>
    <property type="match status" value="1"/>
</dbReference>
<dbReference type="FunFam" id="2.60.40.10:FF:000557">
    <property type="entry name" value="Myosin binding protein Ha"/>
    <property type="match status" value="1"/>
</dbReference>
<dbReference type="FunFam" id="2.60.40.10:FF:000031">
    <property type="entry name" value="Myosin-binding protein C, slow type"/>
    <property type="match status" value="1"/>
</dbReference>
<dbReference type="FunFam" id="2.60.40.10:FF:000062">
    <property type="entry name" value="Myosin-binding protein C, slow type"/>
    <property type="match status" value="1"/>
</dbReference>
<dbReference type="Gene3D" id="2.60.40.10">
    <property type="entry name" value="Immunoglobulins"/>
    <property type="match status" value="4"/>
</dbReference>
<dbReference type="InterPro" id="IPR003961">
    <property type="entry name" value="FN3_dom"/>
</dbReference>
<dbReference type="InterPro" id="IPR036116">
    <property type="entry name" value="FN3_sf"/>
</dbReference>
<dbReference type="InterPro" id="IPR007110">
    <property type="entry name" value="Ig-like_dom"/>
</dbReference>
<dbReference type="InterPro" id="IPR036179">
    <property type="entry name" value="Ig-like_dom_sf"/>
</dbReference>
<dbReference type="InterPro" id="IPR013783">
    <property type="entry name" value="Ig-like_fold"/>
</dbReference>
<dbReference type="InterPro" id="IPR013098">
    <property type="entry name" value="Ig_I-set"/>
</dbReference>
<dbReference type="InterPro" id="IPR003599">
    <property type="entry name" value="Ig_sub"/>
</dbReference>
<dbReference type="InterPro" id="IPR003598">
    <property type="entry name" value="Ig_sub2"/>
</dbReference>
<dbReference type="InterPro" id="IPR050964">
    <property type="entry name" value="Striated_Muscle_Regulatory"/>
</dbReference>
<dbReference type="PANTHER" id="PTHR13817:SF49">
    <property type="entry name" value="MYOSIN-BINDING PROTEIN H"/>
    <property type="match status" value="1"/>
</dbReference>
<dbReference type="PANTHER" id="PTHR13817">
    <property type="entry name" value="TITIN"/>
    <property type="match status" value="1"/>
</dbReference>
<dbReference type="Pfam" id="PF00041">
    <property type="entry name" value="fn3"/>
    <property type="match status" value="2"/>
</dbReference>
<dbReference type="Pfam" id="PF07679">
    <property type="entry name" value="I-set"/>
    <property type="match status" value="2"/>
</dbReference>
<dbReference type="PRINTS" id="PR00014">
    <property type="entry name" value="FNTYPEIII"/>
</dbReference>
<dbReference type="SMART" id="SM00060">
    <property type="entry name" value="FN3"/>
    <property type="match status" value="2"/>
</dbReference>
<dbReference type="SMART" id="SM00409">
    <property type="entry name" value="IG"/>
    <property type="match status" value="2"/>
</dbReference>
<dbReference type="SMART" id="SM00408">
    <property type="entry name" value="IGc2"/>
    <property type="match status" value="2"/>
</dbReference>
<dbReference type="SUPFAM" id="SSF49265">
    <property type="entry name" value="Fibronectin type III"/>
    <property type="match status" value="1"/>
</dbReference>
<dbReference type="SUPFAM" id="SSF48726">
    <property type="entry name" value="Immunoglobulin"/>
    <property type="match status" value="2"/>
</dbReference>
<dbReference type="PROSITE" id="PS50853">
    <property type="entry name" value="FN3"/>
    <property type="match status" value="2"/>
</dbReference>
<dbReference type="PROSITE" id="PS50835">
    <property type="entry name" value="IG_LIKE"/>
    <property type="match status" value="2"/>
</dbReference>
<gene>
    <name type="primary">Mybph</name>
</gene>
<accession>O88599</accession>
<comment type="function">
    <text>Binds to myosin; probably involved in interaction with thick myofilaments in the A-band.</text>
</comment>
<comment type="tissue specificity">
    <text>Skeletal muscle.</text>
</comment>
<comment type="similarity">
    <text evidence="3">Belongs to the immunoglobulin superfamily. MyBP family.</text>
</comment>